<evidence type="ECO:0000255" key="1">
    <source>
        <dbReference type="PROSITE-ProRule" id="PRU00024"/>
    </source>
</evidence>
<evidence type="ECO:0000255" key="2">
    <source>
        <dbReference type="PROSITE-ProRule" id="PRU00175"/>
    </source>
</evidence>
<evidence type="ECO:0000269" key="3">
    <source>
    </source>
</evidence>
<evidence type="ECO:0000305" key="4"/>
<evidence type="ECO:0000312" key="5">
    <source>
        <dbReference type="HGNC" id="HGNC:19021"/>
    </source>
</evidence>
<protein>
    <recommendedName>
        <fullName evidence="4">E3 ubiquitin-protein ligase TRIM48</fullName>
        <ecNumber evidence="3">2.3.2.27</ecNumber>
    </recommendedName>
    <alternativeName>
        <fullName evidence="5">RING finger protein 101</fullName>
    </alternativeName>
    <alternativeName>
        <fullName evidence="5">Tripartite motif-containing protein 48</fullName>
    </alternativeName>
</protein>
<gene>
    <name evidence="5" type="primary">TRIM48</name>
    <name evidence="5" type="synonym">RNF101</name>
</gene>
<name>TRI48_HUMAN</name>
<sequence>MSRRIIVGTLQRTQRNMNSGISQVFQRELTCPICMNYFIDPVTIDCGHSFCRPCFYLNWQDIPILTQCFECIKTIQQRNLKTNIRLKKMASLARKASLWLFLSSEEQMCGIHRETKKMFCEVDRSLLCLLCSSSQEHRYHRHCPAEWAAEEHWEKLLKKMQSLWEKACENQRNLNVETTRISHWKAFGDILYRSESVLLHMPQPLNLALRAGPITGLRDRLNQF</sequence>
<accession>Q8IWZ4</accession>
<accession>Q9BUW4</accession>
<proteinExistence type="evidence at protein level"/>
<comment type="function">
    <text evidence="3">E3 ubiquitin-protein ligase which promotes K48-linked polyubiquitination of protein methyltransferase PRMT1, leading to PRMT1 degradation (PubMed:29186683). This suppresses methylation of the PRMT1 substrate MAP3K5/ASK1, promoting its activation and increasing MAP3K5-dependent cell death induced by oxidative stress (PubMed:29186683). TRIM48-mediated ubiquitination of PRMT1 also suppresses methylation of FOXO1 by PRMT1, leading to inhibition of FOXO1 transcriptional activity (PubMed:29186683).</text>
</comment>
<comment type="catalytic activity">
    <reaction evidence="3">
        <text>S-ubiquitinyl-[E2 ubiquitin-conjugating enzyme]-L-cysteine + [acceptor protein]-L-lysine = [E2 ubiquitin-conjugating enzyme]-L-cysteine + N(6)-ubiquitinyl-[acceptor protein]-L-lysine.</text>
        <dbReference type="EC" id="2.3.2.27"/>
    </reaction>
</comment>
<comment type="subunit">
    <text evidence="3">Interacts with PRMT1; the interaction leads to ubiquitination of PRMT1 by TRIM48 (PubMed:29186683). Interacts with MAP3K5 (PubMed:29186683). Interacts with STRAP (PubMed:29186683).</text>
</comment>
<comment type="interaction">
    <interactant intactId="EBI-17555779">
        <id>Q8IWZ4</id>
    </interactant>
    <interactant intactId="EBI-744782">
        <id>Q9Y5B8</id>
        <label>NME7</label>
    </interactant>
    <organismsDiffer>false</organismsDiffer>
    <experiments>3</experiments>
</comment>
<comment type="subcellular location">
    <subcellularLocation>
        <location evidence="3">Cytoplasm</location>
        <location evidence="3">Cytosol</location>
    </subcellularLocation>
</comment>
<comment type="similarity">
    <text evidence="4">Belongs to the TRIM/RBCC family.</text>
</comment>
<comment type="sequence caution" evidence="4">
    <conflict type="erroneous initiation">
        <sequence resource="EMBL-CDS" id="AAH01862"/>
    </conflict>
    <text>Truncated N-terminus.</text>
</comment>
<comment type="sequence caution" evidence="4">
    <conflict type="erroneous initiation">
        <sequence resource="EMBL-CDS" id="AAO14946"/>
    </conflict>
    <text>Truncated N-terminus.</text>
</comment>
<comment type="sequence caution" evidence="4">
    <conflict type="erroneous termination">
        <sequence resource="EMBL-CDS" id="AAO14946"/>
    </conflict>
    <text>Extended C-terminus.</text>
</comment>
<dbReference type="EC" id="2.3.2.27" evidence="3"/>
<dbReference type="EMBL" id="AF521869">
    <property type="protein sequence ID" value="AAO14946.1"/>
    <property type="status" value="ALT_SEQ"/>
    <property type="molecule type" value="mRNA"/>
</dbReference>
<dbReference type="EMBL" id="BC001862">
    <property type="protein sequence ID" value="AAH01862.1"/>
    <property type="status" value="ALT_INIT"/>
    <property type="molecule type" value="mRNA"/>
</dbReference>
<dbReference type="CCDS" id="CCDS7947.2"/>
<dbReference type="RefSeq" id="NP_077019.2">
    <property type="nucleotide sequence ID" value="NM_024114.5"/>
</dbReference>
<dbReference type="SMR" id="Q8IWZ4"/>
<dbReference type="BioGRID" id="122544">
    <property type="interactions" value="2"/>
</dbReference>
<dbReference type="FunCoup" id="Q8IWZ4">
    <property type="interactions" value="12"/>
</dbReference>
<dbReference type="IntAct" id="Q8IWZ4">
    <property type="interactions" value="1"/>
</dbReference>
<dbReference type="STRING" id="9606.ENSP00000402414"/>
<dbReference type="iPTMnet" id="Q8IWZ4"/>
<dbReference type="PhosphoSitePlus" id="Q8IWZ4"/>
<dbReference type="BioMuta" id="TRIM48"/>
<dbReference type="DMDM" id="251757349"/>
<dbReference type="MassIVE" id="Q8IWZ4"/>
<dbReference type="PaxDb" id="9606-ENSP00000402414"/>
<dbReference type="PeptideAtlas" id="Q8IWZ4"/>
<dbReference type="Antibodypedia" id="27102">
    <property type="antibodies" value="102 antibodies from 15 providers"/>
</dbReference>
<dbReference type="DNASU" id="79097"/>
<dbReference type="Ensembl" id="ENST00000417545.5">
    <property type="protein sequence ID" value="ENSP00000402414.2"/>
    <property type="gene ID" value="ENSG00000150244.12"/>
</dbReference>
<dbReference type="GeneID" id="79097"/>
<dbReference type="KEGG" id="hsa:79097"/>
<dbReference type="MANE-Select" id="ENST00000417545.5">
    <property type="protein sequence ID" value="ENSP00000402414.2"/>
    <property type="RefSeq nucleotide sequence ID" value="NM_024114.5"/>
    <property type="RefSeq protein sequence ID" value="NP_077019.2"/>
</dbReference>
<dbReference type="UCSC" id="uc010rid.2">
    <property type="organism name" value="human"/>
</dbReference>
<dbReference type="AGR" id="HGNC:19021"/>
<dbReference type="CTD" id="79097"/>
<dbReference type="DisGeNET" id="79097"/>
<dbReference type="GeneCards" id="TRIM48"/>
<dbReference type="HGNC" id="HGNC:19021">
    <property type="gene designation" value="TRIM48"/>
</dbReference>
<dbReference type="HPA" id="ENSG00000150244">
    <property type="expression patterns" value="Not detected"/>
</dbReference>
<dbReference type="neXtProt" id="NX_Q8IWZ4"/>
<dbReference type="OpenTargets" id="ENSG00000150244"/>
<dbReference type="PharmGKB" id="PA134981425"/>
<dbReference type="VEuPathDB" id="HostDB:ENSG00000150244"/>
<dbReference type="eggNOG" id="KOG2177">
    <property type="taxonomic scope" value="Eukaryota"/>
</dbReference>
<dbReference type="GeneTree" id="ENSGT00940000163213"/>
<dbReference type="HOGENOM" id="CLU_013137_6_4_1"/>
<dbReference type="InParanoid" id="Q8IWZ4"/>
<dbReference type="OMA" id="WAAEEHW"/>
<dbReference type="OrthoDB" id="654191at2759"/>
<dbReference type="PAN-GO" id="Q8IWZ4">
    <property type="GO annotations" value="5 GO annotations based on evolutionary models"/>
</dbReference>
<dbReference type="PhylomeDB" id="Q8IWZ4"/>
<dbReference type="TreeFam" id="TF338674"/>
<dbReference type="PathwayCommons" id="Q8IWZ4"/>
<dbReference type="Reactome" id="R-HSA-877300">
    <property type="pathway name" value="Interferon gamma signaling"/>
</dbReference>
<dbReference type="SignaLink" id="Q8IWZ4"/>
<dbReference type="SIGNOR" id="Q8IWZ4"/>
<dbReference type="BioGRID-ORCS" id="79097">
    <property type="hits" value="60 hits in 1073 CRISPR screens"/>
</dbReference>
<dbReference type="ChiTaRS" id="TRIM48">
    <property type="organism name" value="human"/>
</dbReference>
<dbReference type="GenomeRNAi" id="79097"/>
<dbReference type="Pharos" id="Q8IWZ4">
    <property type="development level" value="Tdark"/>
</dbReference>
<dbReference type="PRO" id="PR:Q8IWZ4"/>
<dbReference type="Proteomes" id="UP000005640">
    <property type="component" value="Chromosome 11"/>
</dbReference>
<dbReference type="RNAct" id="Q8IWZ4">
    <property type="molecule type" value="protein"/>
</dbReference>
<dbReference type="Bgee" id="ENSG00000150244">
    <property type="expression patterns" value="Expressed in skin of leg"/>
</dbReference>
<dbReference type="GO" id="GO:0005737">
    <property type="term" value="C:cytoplasm"/>
    <property type="evidence" value="ECO:0000318"/>
    <property type="project" value="GO_Central"/>
</dbReference>
<dbReference type="GO" id="GO:0005829">
    <property type="term" value="C:cytosol"/>
    <property type="evidence" value="ECO:0000314"/>
    <property type="project" value="UniProtKB"/>
</dbReference>
<dbReference type="GO" id="GO:0061630">
    <property type="term" value="F:ubiquitin protein ligase activity"/>
    <property type="evidence" value="ECO:0000318"/>
    <property type="project" value="GO_Central"/>
</dbReference>
<dbReference type="GO" id="GO:0008270">
    <property type="term" value="F:zinc ion binding"/>
    <property type="evidence" value="ECO:0007669"/>
    <property type="project" value="UniProtKB-KW"/>
</dbReference>
<dbReference type="GO" id="GO:0045087">
    <property type="term" value="P:innate immune response"/>
    <property type="evidence" value="ECO:0000318"/>
    <property type="project" value="GO_Central"/>
</dbReference>
<dbReference type="GO" id="GO:0010468">
    <property type="term" value="P:regulation of gene expression"/>
    <property type="evidence" value="ECO:0000318"/>
    <property type="project" value="GO_Central"/>
</dbReference>
<dbReference type="CDD" id="cd19783">
    <property type="entry name" value="Bbox2_TRIM43-like"/>
    <property type="match status" value="1"/>
</dbReference>
<dbReference type="CDD" id="cd16603">
    <property type="entry name" value="RING-HC_TRIM43-like_C-IV"/>
    <property type="match status" value="1"/>
</dbReference>
<dbReference type="Gene3D" id="3.30.160.60">
    <property type="entry name" value="Classic Zinc Finger"/>
    <property type="match status" value="1"/>
</dbReference>
<dbReference type="Gene3D" id="3.30.40.10">
    <property type="entry name" value="Zinc/RING finger domain, C3HC4 (zinc finger)"/>
    <property type="match status" value="1"/>
</dbReference>
<dbReference type="InterPro" id="IPR050143">
    <property type="entry name" value="TRIM/RBCC"/>
</dbReference>
<dbReference type="InterPro" id="IPR000315">
    <property type="entry name" value="Znf_B-box"/>
</dbReference>
<dbReference type="InterPro" id="IPR001841">
    <property type="entry name" value="Znf_RING"/>
</dbReference>
<dbReference type="InterPro" id="IPR013083">
    <property type="entry name" value="Znf_RING/FYVE/PHD"/>
</dbReference>
<dbReference type="PANTHER" id="PTHR24103">
    <property type="entry name" value="E3 UBIQUITIN-PROTEIN LIGASE TRIM"/>
    <property type="match status" value="1"/>
</dbReference>
<dbReference type="Pfam" id="PF00643">
    <property type="entry name" value="zf-B_box"/>
    <property type="match status" value="1"/>
</dbReference>
<dbReference type="Pfam" id="PF15227">
    <property type="entry name" value="zf-C3HC4_4"/>
    <property type="match status" value="1"/>
</dbReference>
<dbReference type="SMART" id="SM00336">
    <property type="entry name" value="BBOX"/>
    <property type="match status" value="1"/>
</dbReference>
<dbReference type="SMART" id="SM00184">
    <property type="entry name" value="RING"/>
    <property type="match status" value="1"/>
</dbReference>
<dbReference type="SUPFAM" id="SSF57845">
    <property type="entry name" value="B-box zinc-binding domain"/>
    <property type="match status" value="1"/>
</dbReference>
<dbReference type="SUPFAM" id="SSF57850">
    <property type="entry name" value="RING/U-box"/>
    <property type="match status" value="1"/>
</dbReference>
<dbReference type="PROSITE" id="PS50119">
    <property type="entry name" value="ZF_BBOX"/>
    <property type="match status" value="1"/>
</dbReference>
<dbReference type="PROSITE" id="PS50089">
    <property type="entry name" value="ZF_RING_2"/>
    <property type="match status" value="1"/>
</dbReference>
<reference key="1">
    <citation type="submission" date="2002-06" db="EMBL/GenBank/DDBJ databases">
        <title>Novel tripartite motif family members.</title>
        <authorList>
            <person name="Meroni G."/>
        </authorList>
    </citation>
    <scope>NUCLEOTIDE SEQUENCE [MRNA]</scope>
</reference>
<reference key="2">
    <citation type="journal article" date="2004" name="Genome Res.">
        <title>The status, quality, and expansion of the NIH full-length cDNA project: the Mammalian Gene Collection (MGC).</title>
        <authorList>
            <consortium name="The MGC Project Team"/>
        </authorList>
    </citation>
    <scope>NUCLEOTIDE SEQUENCE [LARGE SCALE MRNA]</scope>
    <source>
        <tissue>Uterus</tissue>
    </source>
</reference>
<reference key="3">
    <citation type="journal article" date="2017" name="Cell Rep.">
        <title>TRIM48 Promotes ASK1 Activation and Cell Death through Ubiquitination-Dependent Degradation of the ASK1-Negative Regulator PRMT1.</title>
        <authorList>
            <person name="Hirata Y."/>
            <person name="Katagiri K."/>
            <person name="Nagaoka K."/>
            <person name="Morishita T."/>
            <person name="Kudoh Y."/>
            <person name="Hatta T."/>
            <person name="Naguro I."/>
            <person name="Kano K."/>
            <person name="Udagawa T."/>
            <person name="Natsume T."/>
            <person name="Aoki J."/>
            <person name="Inada T."/>
            <person name="Noguchi T."/>
            <person name="Ichijo H."/>
            <person name="Matsuzawa A."/>
        </authorList>
    </citation>
    <scope>FUNCTION</scope>
    <scope>CATALYTIC ACTIVITY</scope>
    <scope>INTERACTION WITH PRMT1; MAP3K5 AND STRAP</scope>
    <scope>SUBCELLULAR LOCATION</scope>
    <scope>MUTAGENESIS OF CYS-46</scope>
</reference>
<keyword id="KW-0963">Cytoplasm</keyword>
<keyword id="KW-0479">Metal-binding</keyword>
<keyword id="KW-1185">Reference proteome</keyword>
<keyword id="KW-0808">Transferase</keyword>
<keyword id="KW-0833">Ubl conjugation pathway</keyword>
<keyword id="KW-0862">Zinc</keyword>
<keyword id="KW-0863">Zinc-finger</keyword>
<feature type="chain" id="PRO_0000056272" description="E3 ubiquitin-protein ligase TRIM48">
    <location>
        <begin position="1"/>
        <end position="224"/>
    </location>
</feature>
<feature type="zinc finger region" description="RING-type" evidence="2">
    <location>
        <begin position="31"/>
        <end position="72"/>
    </location>
</feature>
<feature type="zinc finger region" description="B box-type" evidence="1">
    <location>
        <begin position="104"/>
        <end position="145"/>
    </location>
</feature>
<feature type="binding site" evidence="1">
    <location>
        <position position="109"/>
    </location>
    <ligand>
        <name>Zn(2+)</name>
        <dbReference type="ChEBI" id="CHEBI:29105"/>
    </ligand>
</feature>
<feature type="binding site" evidence="1">
    <location>
        <position position="112"/>
    </location>
    <ligand>
        <name>Zn(2+)</name>
        <dbReference type="ChEBI" id="CHEBI:29105"/>
    </ligand>
</feature>
<feature type="binding site" evidence="1">
    <location>
        <position position="131"/>
    </location>
    <ligand>
        <name>Zn(2+)</name>
        <dbReference type="ChEBI" id="CHEBI:29105"/>
    </ligand>
</feature>
<feature type="binding site" evidence="1">
    <location>
        <position position="137"/>
    </location>
    <ligand>
        <name>Zn(2+)</name>
        <dbReference type="ChEBI" id="CHEBI:29105"/>
    </ligand>
</feature>
<feature type="mutagenesis site" description="Abolishes PRMT1 ubiquitination and MAP3K5 activation." evidence="3">
    <original>C</original>
    <variation>S</variation>
    <location>
        <position position="46"/>
    </location>
</feature>
<organism>
    <name type="scientific">Homo sapiens</name>
    <name type="common">Human</name>
    <dbReference type="NCBI Taxonomy" id="9606"/>
    <lineage>
        <taxon>Eukaryota</taxon>
        <taxon>Metazoa</taxon>
        <taxon>Chordata</taxon>
        <taxon>Craniata</taxon>
        <taxon>Vertebrata</taxon>
        <taxon>Euteleostomi</taxon>
        <taxon>Mammalia</taxon>
        <taxon>Eutheria</taxon>
        <taxon>Euarchontoglires</taxon>
        <taxon>Primates</taxon>
        <taxon>Haplorrhini</taxon>
        <taxon>Catarrhini</taxon>
        <taxon>Hominidae</taxon>
        <taxon>Homo</taxon>
    </lineage>
</organism>